<proteinExistence type="evidence at protein level"/>
<organism>
    <name type="scientific">Mus musculus</name>
    <name type="common">Mouse</name>
    <dbReference type="NCBI Taxonomy" id="10090"/>
    <lineage>
        <taxon>Eukaryota</taxon>
        <taxon>Metazoa</taxon>
        <taxon>Chordata</taxon>
        <taxon>Craniata</taxon>
        <taxon>Vertebrata</taxon>
        <taxon>Euteleostomi</taxon>
        <taxon>Mammalia</taxon>
        <taxon>Eutheria</taxon>
        <taxon>Euarchontoglires</taxon>
        <taxon>Glires</taxon>
        <taxon>Rodentia</taxon>
        <taxon>Myomorpha</taxon>
        <taxon>Muroidea</taxon>
        <taxon>Muridae</taxon>
        <taxon>Murinae</taxon>
        <taxon>Mus</taxon>
        <taxon>Mus</taxon>
    </lineage>
</organism>
<gene>
    <name type="primary">Edil3</name>
    <name type="synonym">Del1</name>
</gene>
<protein>
    <recommendedName>
        <fullName>EGF-like repeat and discoidin I-like domain-containing protein 3</fullName>
    </recommendedName>
    <alternativeName>
        <fullName>Developmentally-regulated endothelial cell locus 1 protein</fullName>
    </alternativeName>
    <alternativeName>
        <fullName>Integrin-binding protein DEL1</fullName>
    </alternativeName>
</protein>
<keyword id="KW-0025">Alternative splicing</keyword>
<keyword id="KW-0106">Calcium</keyword>
<keyword id="KW-0130">Cell adhesion</keyword>
<keyword id="KW-0217">Developmental protein</keyword>
<keyword id="KW-1015">Disulfide bond</keyword>
<keyword id="KW-0245">EGF-like domain</keyword>
<keyword id="KW-0325">Glycoprotein</keyword>
<keyword id="KW-0479">Metal-binding</keyword>
<keyword id="KW-1185">Reference proteome</keyword>
<keyword id="KW-0677">Repeat</keyword>
<keyword id="KW-0964">Secreted</keyword>
<keyword id="KW-0732">Signal</keyword>
<reference key="1">
    <citation type="journal article" date="1998" name="Genes Dev.">
        <title>Cloning and characterization of developmental endothelial locus-1: an embryonic endothelial cell protein that binds the alphavbeta3 integrin receptor.</title>
        <authorList>
            <person name="Hidai C."/>
            <person name="Zupancic T.J."/>
            <person name="Penta K."/>
            <person name="Mikhail A."/>
            <person name="Kawana M."/>
            <person name="Quertermous E.E."/>
            <person name="Aoka Y."/>
            <person name="Fukagawa M."/>
            <person name="Matsui Y."/>
            <person name="Platika D."/>
            <person name="Auerbach R."/>
            <person name="Hogan B.L.M."/>
            <person name="Snodgrass R."/>
            <person name="Quertermous T."/>
        </authorList>
    </citation>
    <scope>NUCLEOTIDE SEQUENCE [MRNA] (ISOFORMS 1 AND 2)</scope>
    <scope>CHARACTERIZATION</scope>
    <source>
        <tissue>Embryo</tissue>
    </source>
</reference>
<reference key="2">
    <citation type="journal article" date="2005" name="Science">
        <title>The transcriptional landscape of the mammalian genome.</title>
        <authorList>
            <person name="Carninci P."/>
            <person name="Kasukawa T."/>
            <person name="Katayama S."/>
            <person name="Gough J."/>
            <person name="Frith M.C."/>
            <person name="Maeda N."/>
            <person name="Oyama R."/>
            <person name="Ravasi T."/>
            <person name="Lenhard B."/>
            <person name="Wells C."/>
            <person name="Kodzius R."/>
            <person name="Shimokawa K."/>
            <person name="Bajic V.B."/>
            <person name="Brenner S.E."/>
            <person name="Batalov S."/>
            <person name="Forrest A.R."/>
            <person name="Zavolan M."/>
            <person name="Davis M.J."/>
            <person name="Wilming L.G."/>
            <person name="Aidinis V."/>
            <person name="Allen J.E."/>
            <person name="Ambesi-Impiombato A."/>
            <person name="Apweiler R."/>
            <person name="Aturaliya R.N."/>
            <person name="Bailey T.L."/>
            <person name="Bansal M."/>
            <person name="Baxter L."/>
            <person name="Beisel K.W."/>
            <person name="Bersano T."/>
            <person name="Bono H."/>
            <person name="Chalk A.M."/>
            <person name="Chiu K.P."/>
            <person name="Choudhary V."/>
            <person name="Christoffels A."/>
            <person name="Clutterbuck D.R."/>
            <person name="Crowe M.L."/>
            <person name="Dalla E."/>
            <person name="Dalrymple B.P."/>
            <person name="de Bono B."/>
            <person name="Della Gatta G."/>
            <person name="di Bernardo D."/>
            <person name="Down T."/>
            <person name="Engstrom P."/>
            <person name="Fagiolini M."/>
            <person name="Faulkner G."/>
            <person name="Fletcher C.F."/>
            <person name="Fukushima T."/>
            <person name="Furuno M."/>
            <person name="Futaki S."/>
            <person name="Gariboldi M."/>
            <person name="Georgii-Hemming P."/>
            <person name="Gingeras T.R."/>
            <person name="Gojobori T."/>
            <person name="Green R.E."/>
            <person name="Gustincich S."/>
            <person name="Harbers M."/>
            <person name="Hayashi Y."/>
            <person name="Hensch T.K."/>
            <person name="Hirokawa N."/>
            <person name="Hill D."/>
            <person name="Huminiecki L."/>
            <person name="Iacono M."/>
            <person name="Ikeo K."/>
            <person name="Iwama A."/>
            <person name="Ishikawa T."/>
            <person name="Jakt M."/>
            <person name="Kanapin A."/>
            <person name="Katoh M."/>
            <person name="Kawasawa Y."/>
            <person name="Kelso J."/>
            <person name="Kitamura H."/>
            <person name="Kitano H."/>
            <person name="Kollias G."/>
            <person name="Krishnan S.P."/>
            <person name="Kruger A."/>
            <person name="Kummerfeld S.K."/>
            <person name="Kurochkin I.V."/>
            <person name="Lareau L.F."/>
            <person name="Lazarevic D."/>
            <person name="Lipovich L."/>
            <person name="Liu J."/>
            <person name="Liuni S."/>
            <person name="McWilliam S."/>
            <person name="Madan Babu M."/>
            <person name="Madera M."/>
            <person name="Marchionni L."/>
            <person name="Matsuda H."/>
            <person name="Matsuzawa S."/>
            <person name="Miki H."/>
            <person name="Mignone F."/>
            <person name="Miyake S."/>
            <person name="Morris K."/>
            <person name="Mottagui-Tabar S."/>
            <person name="Mulder N."/>
            <person name="Nakano N."/>
            <person name="Nakauchi H."/>
            <person name="Ng P."/>
            <person name="Nilsson R."/>
            <person name="Nishiguchi S."/>
            <person name="Nishikawa S."/>
            <person name="Nori F."/>
            <person name="Ohara O."/>
            <person name="Okazaki Y."/>
            <person name="Orlando V."/>
            <person name="Pang K.C."/>
            <person name="Pavan W.J."/>
            <person name="Pavesi G."/>
            <person name="Pesole G."/>
            <person name="Petrovsky N."/>
            <person name="Piazza S."/>
            <person name="Reed J."/>
            <person name="Reid J.F."/>
            <person name="Ring B.Z."/>
            <person name="Ringwald M."/>
            <person name="Rost B."/>
            <person name="Ruan Y."/>
            <person name="Salzberg S.L."/>
            <person name="Sandelin A."/>
            <person name="Schneider C."/>
            <person name="Schoenbach C."/>
            <person name="Sekiguchi K."/>
            <person name="Semple C.A."/>
            <person name="Seno S."/>
            <person name="Sessa L."/>
            <person name="Sheng Y."/>
            <person name="Shibata Y."/>
            <person name="Shimada H."/>
            <person name="Shimada K."/>
            <person name="Silva D."/>
            <person name="Sinclair B."/>
            <person name="Sperling S."/>
            <person name="Stupka E."/>
            <person name="Sugiura K."/>
            <person name="Sultana R."/>
            <person name="Takenaka Y."/>
            <person name="Taki K."/>
            <person name="Tammoja K."/>
            <person name="Tan S.L."/>
            <person name="Tang S."/>
            <person name="Taylor M.S."/>
            <person name="Tegner J."/>
            <person name="Teichmann S.A."/>
            <person name="Ueda H.R."/>
            <person name="van Nimwegen E."/>
            <person name="Verardo R."/>
            <person name="Wei C.L."/>
            <person name="Yagi K."/>
            <person name="Yamanishi H."/>
            <person name="Zabarovsky E."/>
            <person name="Zhu S."/>
            <person name="Zimmer A."/>
            <person name="Hide W."/>
            <person name="Bult C."/>
            <person name="Grimmond S.M."/>
            <person name="Teasdale R.D."/>
            <person name="Liu E.T."/>
            <person name="Brusic V."/>
            <person name="Quackenbush J."/>
            <person name="Wahlestedt C."/>
            <person name="Mattick J.S."/>
            <person name="Hume D.A."/>
            <person name="Kai C."/>
            <person name="Sasaki D."/>
            <person name="Tomaru Y."/>
            <person name="Fukuda S."/>
            <person name="Kanamori-Katayama M."/>
            <person name="Suzuki M."/>
            <person name="Aoki J."/>
            <person name="Arakawa T."/>
            <person name="Iida J."/>
            <person name="Imamura K."/>
            <person name="Itoh M."/>
            <person name="Kato T."/>
            <person name="Kawaji H."/>
            <person name="Kawagashira N."/>
            <person name="Kawashima T."/>
            <person name="Kojima M."/>
            <person name="Kondo S."/>
            <person name="Konno H."/>
            <person name="Nakano K."/>
            <person name="Ninomiya N."/>
            <person name="Nishio T."/>
            <person name="Okada M."/>
            <person name="Plessy C."/>
            <person name="Shibata K."/>
            <person name="Shiraki T."/>
            <person name="Suzuki S."/>
            <person name="Tagami M."/>
            <person name="Waki K."/>
            <person name="Watahiki A."/>
            <person name="Okamura-Oho Y."/>
            <person name="Suzuki H."/>
            <person name="Kawai J."/>
            <person name="Hayashizaki Y."/>
        </authorList>
    </citation>
    <scope>NUCLEOTIDE SEQUENCE [LARGE SCALE MRNA] (ISOFORM 1)</scope>
    <source>
        <strain>C57BL/6J</strain>
        <tissue>Cerebellum</tissue>
    </source>
</reference>
<reference key="3">
    <citation type="journal article" date="2009" name="PLoS Biol.">
        <title>Lineage-specific biology revealed by a finished genome assembly of the mouse.</title>
        <authorList>
            <person name="Church D.M."/>
            <person name="Goodstadt L."/>
            <person name="Hillier L.W."/>
            <person name="Zody M.C."/>
            <person name="Goldstein S."/>
            <person name="She X."/>
            <person name="Bult C.J."/>
            <person name="Agarwala R."/>
            <person name="Cherry J.L."/>
            <person name="DiCuccio M."/>
            <person name="Hlavina W."/>
            <person name="Kapustin Y."/>
            <person name="Meric P."/>
            <person name="Maglott D."/>
            <person name="Birtle Z."/>
            <person name="Marques A.C."/>
            <person name="Graves T."/>
            <person name="Zhou S."/>
            <person name="Teague B."/>
            <person name="Potamousis K."/>
            <person name="Churas C."/>
            <person name="Place M."/>
            <person name="Herschleb J."/>
            <person name="Runnheim R."/>
            <person name="Forrest D."/>
            <person name="Amos-Landgraf J."/>
            <person name="Schwartz D.C."/>
            <person name="Cheng Z."/>
            <person name="Lindblad-Toh K."/>
            <person name="Eichler E.E."/>
            <person name="Ponting C.P."/>
        </authorList>
    </citation>
    <scope>NUCLEOTIDE SEQUENCE [LARGE SCALE GENOMIC DNA]</scope>
    <source>
        <strain>C57BL/6J</strain>
    </source>
</reference>
<reference key="4">
    <citation type="submission" date="2005-09" db="EMBL/GenBank/DDBJ databases">
        <authorList>
            <person name="Mural R.J."/>
            <person name="Adams M.D."/>
            <person name="Myers E.W."/>
            <person name="Smith H.O."/>
            <person name="Venter J.C."/>
        </authorList>
    </citation>
    <scope>NUCLEOTIDE SEQUENCE [LARGE SCALE GENOMIC DNA]</scope>
</reference>
<reference key="5">
    <citation type="journal article" date="2004" name="Genome Res.">
        <title>The status, quality, and expansion of the NIH full-length cDNA project: the Mammalian Gene Collection (MGC).</title>
        <authorList>
            <consortium name="The MGC Project Team"/>
        </authorList>
    </citation>
    <scope>NUCLEOTIDE SEQUENCE [LARGE SCALE MRNA] (ISOFORM 1)</scope>
    <source>
        <strain>C57BL/6J</strain>
        <tissue>Brain</tissue>
    </source>
</reference>
<feature type="signal peptide" evidence="2">
    <location>
        <begin position="1"/>
        <end position="23"/>
    </location>
</feature>
<feature type="chain" id="PRO_0000007523" description="EGF-like repeat and discoidin I-like domain-containing protein 3">
    <location>
        <begin position="24"/>
        <end position="480"/>
    </location>
</feature>
<feature type="domain" description="EGF-like 1" evidence="3">
    <location>
        <begin position="24"/>
        <end position="60"/>
    </location>
</feature>
<feature type="domain" description="EGF-like 2" evidence="3">
    <location>
        <begin position="74"/>
        <end position="117"/>
    </location>
</feature>
<feature type="domain" description="EGF-like 3" evidence="3">
    <location>
        <begin position="119"/>
        <end position="155"/>
    </location>
</feature>
<feature type="domain" description="F5/8 type C 1" evidence="4">
    <location>
        <begin position="158"/>
        <end position="314"/>
    </location>
</feature>
<feature type="domain" description="F5/8 type C 2" evidence="4">
    <location>
        <begin position="319"/>
        <end position="476"/>
    </location>
</feature>
<feature type="short sequence motif" description="Cell attachment site" evidence="1">
    <location>
        <begin position="96"/>
        <end position="98"/>
    </location>
</feature>
<feature type="binding site" evidence="1">
    <location>
        <position position="119"/>
    </location>
    <ligand>
        <name>Ca(2+)</name>
        <dbReference type="ChEBI" id="CHEBI:29108"/>
    </ligand>
</feature>
<feature type="binding site" evidence="1">
    <location>
        <position position="120"/>
    </location>
    <ligand>
        <name>Ca(2+)</name>
        <dbReference type="ChEBI" id="CHEBI:29108"/>
    </ligand>
</feature>
<feature type="binding site" evidence="1">
    <location>
        <position position="122"/>
    </location>
    <ligand>
        <name>Ca(2+)</name>
        <dbReference type="ChEBI" id="CHEBI:29108"/>
    </ligand>
</feature>
<feature type="binding site" evidence="1">
    <location>
        <position position="136"/>
    </location>
    <ligand>
        <name>Ca(2+)</name>
        <dbReference type="ChEBI" id="CHEBI:29108"/>
    </ligand>
</feature>
<feature type="binding site" evidence="1">
    <location>
        <position position="137"/>
    </location>
    <ligand>
        <name>Ca(2+)</name>
        <dbReference type="ChEBI" id="CHEBI:29108"/>
    </ligand>
</feature>
<feature type="glycosylation site" description="O-linked (GalNAc...) threonine" evidence="1">
    <location>
        <position position="73"/>
    </location>
</feature>
<feature type="glycosylation site" description="O-linked (Fuc...) threonine" evidence="1">
    <location>
        <position position="88"/>
    </location>
</feature>
<feature type="glycosylation site" description="N-linked (GlcNAc...) asparagine" evidence="2">
    <location>
        <position position="140"/>
    </location>
</feature>
<feature type="disulfide bond" evidence="1">
    <location>
        <begin position="26"/>
        <end position="37"/>
    </location>
</feature>
<feature type="disulfide bond" evidence="1">
    <location>
        <begin position="31"/>
        <end position="48"/>
    </location>
</feature>
<feature type="disulfide bond" evidence="1">
    <location>
        <begin position="50"/>
        <end position="59"/>
    </location>
</feature>
<feature type="disulfide bond" evidence="1">
    <location>
        <begin position="78"/>
        <end position="89"/>
    </location>
</feature>
<feature type="disulfide bond" evidence="1">
    <location>
        <begin position="83"/>
        <end position="105"/>
    </location>
</feature>
<feature type="disulfide bond" evidence="1">
    <location>
        <begin position="107"/>
        <end position="116"/>
    </location>
</feature>
<feature type="disulfide bond" evidence="1">
    <location>
        <begin position="123"/>
        <end position="134"/>
    </location>
</feature>
<feature type="disulfide bond" evidence="1">
    <location>
        <begin position="128"/>
        <end position="143"/>
    </location>
</feature>
<feature type="disulfide bond" evidence="1">
    <location>
        <begin position="145"/>
        <end position="154"/>
    </location>
</feature>
<feature type="disulfide bond" evidence="1">
    <location>
        <begin position="158"/>
        <end position="314"/>
    </location>
</feature>
<feature type="disulfide bond" evidence="1">
    <location>
        <begin position="301"/>
        <end position="305"/>
    </location>
</feature>
<feature type="disulfide bond" evidence="1">
    <location>
        <begin position="319"/>
        <end position="476"/>
    </location>
</feature>
<feature type="splice variant" id="VSP_050400" description="In isoform 2." evidence="5">
    <original>INLQ</original>
    <variation>VTVG</variation>
    <location>
        <begin position="218"/>
        <end position="221"/>
    </location>
</feature>
<feature type="splice variant" id="VSP_050401" description="In isoform 2." evidence="5">
    <location>
        <begin position="222"/>
        <end position="480"/>
    </location>
</feature>
<feature type="sequence conflict" description="In Ref. 1; AAB86585/AAB86586." evidence="6" ref="1">
    <original>Q</original>
    <variation>R</variation>
    <location>
        <position position="187"/>
    </location>
</feature>
<name>EDIL3_MOUSE</name>
<evidence type="ECO:0000250" key="1"/>
<evidence type="ECO:0000255" key="2"/>
<evidence type="ECO:0000255" key="3">
    <source>
        <dbReference type="PROSITE-ProRule" id="PRU00076"/>
    </source>
</evidence>
<evidence type="ECO:0000255" key="4">
    <source>
        <dbReference type="PROSITE-ProRule" id="PRU00081"/>
    </source>
</evidence>
<evidence type="ECO:0000303" key="5">
    <source>
    </source>
</evidence>
<evidence type="ECO:0000305" key="6"/>
<dbReference type="EMBL" id="AF031524">
    <property type="protein sequence ID" value="AAB86585.1"/>
    <property type="molecule type" value="mRNA"/>
</dbReference>
<dbReference type="EMBL" id="AF031525">
    <property type="protein sequence ID" value="AAB86586.1"/>
    <property type="molecule type" value="mRNA"/>
</dbReference>
<dbReference type="EMBL" id="AK036117">
    <property type="protein sequence ID" value="BAC29310.1"/>
    <property type="molecule type" value="mRNA"/>
</dbReference>
<dbReference type="EMBL" id="AK139093">
    <property type="protein sequence ID" value="BAE23887.1"/>
    <property type="molecule type" value="mRNA"/>
</dbReference>
<dbReference type="EMBL" id="AC121916">
    <property type="status" value="NOT_ANNOTATED_CDS"/>
    <property type="molecule type" value="Genomic_DNA"/>
</dbReference>
<dbReference type="EMBL" id="AC154668">
    <property type="status" value="NOT_ANNOTATED_CDS"/>
    <property type="molecule type" value="Genomic_DNA"/>
</dbReference>
<dbReference type="EMBL" id="AC161244">
    <property type="status" value="NOT_ANNOTATED_CDS"/>
    <property type="molecule type" value="Genomic_DNA"/>
</dbReference>
<dbReference type="EMBL" id="CT010458">
    <property type="status" value="NOT_ANNOTATED_CDS"/>
    <property type="molecule type" value="Genomic_DNA"/>
</dbReference>
<dbReference type="EMBL" id="CH466567">
    <property type="protein sequence ID" value="EDL00986.1"/>
    <property type="molecule type" value="Genomic_DNA"/>
</dbReference>
<dbReference type="EMBL" id="BC056386">
    <property type="protein sequence ID" value="AAH56386.1"/>
    <property type="molecule type" value="mRNA"/>
</dbReference>
<dbReference type="CCDS" id="CCDS26669.1">
    <molecule id="O35474-1"/>
</dbReference>
<dbReference type="RefSeq" id="NP_001033076.1">
    <molecule id="O35474-1"/>
    <property type="nucleotide sequence ID" value="NM_001037987.4"/>
</dbReference>
<dbReference type="RefSeq" id="NP_034233.1">
    <property type="nucleotide sequence ID" value="NM_010103.4"/>
</dbReference>
<dbReference type="SMR" id="O35474"/>
<dbReference type="FunCoup" id="O35474">
    <property type="interactions" value="493"/>
</dbReference>
<dbReference type="STRING" id="10090.ENSMUSP00000080462"/>
<dbReference type="GlyCosmos" id="O35474">
    <property type="glycosylation" value="3 sites, No reported glycans"/>
</dbReference>
<dbReference type="GlyGen" id="O35474">
    <property type="glycosylation" value="5 sites, 2 N-linked glycans (3 sites)"/>
</dbReference>
<dbReference type="PhosphoSitePlus" id="O35474"/>
<dbReference type="SwissPalm" id="O35474"/>
<dbReference type="PaxDb" id="10090-ENSMUSP00000080462"/>
<dbReference type="PeptideAtlas" id="O35474"/>
<dbReference type="ProteomicsDB" id="277680">
    <molecule id="O35474-1"/>
</dbReference>
<dbReference type="ProteomicsDB" id="277681">
    <molecule id="O35474-2"/>
</dbReference>
<dbReference type="Pumba" id="O35474"/>
<dbReference type="Antibodypedia" id="24753">
    <property type="antibodies" value="292 antibodies from 30 providers"/>
</dbReference>
<dbReference type="DNASU" id="13612"/>
<dbReference type="Ensembl" id="ENSMUST00000081769.13">
    <molecule id="O35474-1"/>
    <property type="protein sequence ID" value="ENSMUSP00000080462.7"/>
    <property type="gene ID" value="ENSMUSG00000034488.15"/>
</dbReference>
<dbReference type="GeneID" id="13612"/>
<dbReference type="KEGG" id="mmu:13612"/>
<dbReference type="UCSC" id="uc007rjb.2">
    <molecule id="O35474-2"/>
    <property type="organism name" value="mouse"/>
</dbReference>
<dbReference type="UCSC" id="uc007rjd.2">
    <molecule id="O35474-1"/>
    <property type="organism name" value="mouse"/>
</dbReference>
<dbReference type="AGR" id="MGI:1329025"/>
<dbReference type="CTD" id="10085"/>
<dbReference type="MGI" id="MGI:1329025">
    <property type="gene designation" value="Edil3"/>
</dbReference>
<dbReference type="VEuPathDB" id="HostDB:ENSMUSG00000034488"/>
<dbReference type="eggNOG" id="ENOG502QU9M">
    <property type="taxonomic scope" value="Eukaryota"/>
</dbReference>
<dbReference type="GeneTree" id="ENSGT00940000158144"/>
<dbReference type="InParanoid" id="O35474"/>
<dbReference type="OMA" id="RWTIYQD"/>
<dbReference type="OrthoDB" id="10046852at2759"/>
<dbReference type="PhylomeDB" id="O35474"/>
<dbReference type="TreeFam" id="TF330156"/>
<dbReference type="BioGRID-ORCS" id="13612">
    <property type="hits" value="2 hits in 75 CRISPR screens"/>
</dbReference>
<dbReference type="ChiTaRS" id="Edil3">
    <property type="organism name" value="mouse"/>
</dbReference>
<dbReference type="PRO" id="PR:O35474"/>
<dbReference type="Proteomes" id="UP000000589">
    <property type="component" value="Chromosome 13"/>
</dbReference>
<dbReference type="RNAct" id="O35474">
    <property type="molecule type" value="protein"/>
</dbReference>
<dbReference type="Bgee" id="ENSMUSG00000034488">
    <property type="expression patterns" value="Expressed in lateral geniculate body and 182 other cell types or tissues"/>
</dbReference>
<dbReference type="ExpressionAtlas" id="O35474">
    <property type="expression patterns" value="baseline and differential"/>
</dbReference>
<dbReference type="GO" id="GO:0005576">
    <property type="term" value="C:extracellular region"/>
    <property type="evidence" value="ECO:0007669"/>
    <property type="project" value="UniProtKB-SubCell"/>
</dbReference>
<dbReference type="GO" id="GO:0005509">
    <property type="term" value="F:calcium ion binding"/>
    <property type="evidence" value="ECO:0007669"/>
    <property type="project" value="InterPro"/>
</dbReference>
<dbReference type="GO" id="GO:0007155">
    <property type="term" value="P:cell adhesion"/>
    <property type="evidence" value="ECO:0007669"/>
    <property type="project" value="UniProtKB-KW"/>
</dbReference>
<dbReference type="GO" id="GO:0010811">
    <property type="term" value="P:positive regulation of cell-substrate adhesion"/>
    <property type="evidence" value="ECO:0000314"/>
    <property type="project" value="MGI"/>
</dbReference>
<dbReference type="CDD" id="cd00054">
    <property type="entry name" value="EGF_CA"/>
    <property type="match status" value="3"/>
</dbReference>
<dbReference type="CDD" id="cd00057">
    <property type="entry name" value="FA58C"/>
    <property type="match status" value="2"/>
</dbReference>
<dbReference type="FunFam" id="2.60.120.260:FF:000002">
    <property type="entry name" value="Coagulation factor VIII"/>
    <property type="match status" value="2"/>
</dbReference>
<dbReference type="FunFam" id="2.10.25.10:FF:000246">
    <property type="entry name" value="EGF-like repeat and discoidin I-like domain-containing protein 3"/>
    <property type="match status" value="1"/>
</dbReference>
<dbReference type="FunFam" id="2.10.25.10:FF:000447">
    <property type="entry name" value="EGF-like repeat and discoidin I-like domain-containing protein 3"/>
    <property type="match status" value="1"/>
</dbReference>
<dbReference type="Gene3D" id="2.60.120.260">
    <property type="entry name" value="Galactose-binding domain-like"/>
    <property type="match status" value="2"/>
</dbReference>
<dbReference type="Gene3D" id="2.10.25.10">
    <property type="entry name" value="Laminin"/>
    <property type="match status" value="3"/>
</dbReference>
<dbReference type="InterPro" id="IPR001881">
    <property type="entry name" value="EGF-like_Ca-bd_dom"/>
</dbReference>
<dbReference type="InterPro" id="IPR013032">
    <property type="entry name" value="EGF-like_CS"/>
</dbReference>
<dbReference type="InterPro" id="IPR000742">
    <property type="entry name" value="EGF-like_dom"/>
</dbReference>
<dbReference type="InterPro" id="IPR000152">
    <property type="entry name" value="EGF-type_Asp/Asn_hydroxyl_site"/>
</dbReference>
<dbReference type="InterPro" id="IPR018097">
    <property type="entry name" value="EGF_Ca-bd_CS"/>
</dbReference>
<dbReference type="InterPro" id="IPR000421">
    <property type="entry name" value="FA58C"/>
</dbReference>
<dbReference type="InterPro" id="IPR008979">
    <property type="entry name" value="Galactose-bd-like_sf"/>
</dbReference>
<dbReference type="InterPro" id="IPR050633">
    <property type="entry name" value="Neuropilin_MCO_CoagFactor"/>
</dbReference>
<dbReference type="PANTHER" id="PTHR46806:SF9">
    <property type="entry name" value="EGF-LIKE REPEAT AND DISCOIDIN I-LIKE DOMAIN-CONTAINING PROTEIN 3 PRECURSOR"/>
    <property type="match status" value="1"/>
</dbReference>
<dbReference type="PANTHER" id="PTHR46806">
    <property type="entry name" value="F5/8 TYPE C DOMAIN-CONTAINING PROTEIN"/>
    <property type="match status" value="1"/>
</dbReference>
<dbReference type="Pfam" id="PF00008">
    <property type="entry name" value="EGF"/>
    <property type="match status" value="2"/>
</dbReference>
<dbReference type="Pfam" id="PF00754">
    <property type="entry name" value="F5_F8_type_C"/>
    <property type="match status" value="2"/>
</dbReference>
<dbReference type="Pfam" id="PF12661">
    <property type="entry name" value="hEGF"/>
    <property type="match status" value="1"/>
</dbReference>
<dbReference type="SMART" id="SM00181">
    <property type="entry name" value="EGF"/>
    <property type="match status" value="3"/>
</dbReference>
<dbReference type="SMART" id="SM00179">
    <property type="entry name" value="EGF_CA"/>
    <property type="match status" value="3"/>
</dbReference>
<dbReference type="SMART" id="SM00231">
    <property type="entry name" value="FA58C"/>
    <property type="match status" value="2"/>
</dbReference>
<dbReference type="SUPFAM" id="SSF57196">
    <property type="entry name" value="EGF/Laminin"/>
    <property type="match status" value="3"/>
</dbReference>
<dbReference type="SUPFAM" id="SSF49785">
    <property type="entry name" value="Galactose-binding domain-like"/>
    <property type="match status" value="2"/>
</dbReference>
<dbReference type="PROSITE" id="PS00010">
    <property type="entry name" value="ASX_HYDROXYL"/>
    <property type="match status" value="1"/>
</dbReference>
<dbReference type="PROSITE" id="PS00022">
    <property type="entry name" value="EGF_1"/>
    <property type="match status" value="3"/>
</dbReference>
<dbReference type="PROSITE" id="PS01186">
    <property type="entry name" value="EGF_2"/>
    <property type="match status" value="2"/>
</dbReference>
<dbReference type="PROSITE" id="PS50026">
    <property type="entry name" value="EGF_3"/>
    <property type="match status" value="3"/>
</dbReference>
<dbReference type="PROSITE" id="PS01187">
    <property type="entry name" value="EGF_CA"/>
    <property type="match status" value="1"/>
</dbReference>
<dbReference type="PROSITE" id="PS01285">
    <property type="entry name" value="FA58C_1"/>
    <property type="match status" value="2"/>
</dbReference>
<dbReference type="PROSITE" id="PS01286">
    <property type="entry name" value="FA58C_2"/>
    <property type="match status" value="2"/>
</dbReference>
<dbReference type="PROSITE" id="PS50022">
    <property type="entry name" value="FA58C_3"/>
    <property type="match status" value="2"/>
</dbReference>
<comment type="function">
    <text>Promotes adhesion of endothelial cells through interaction with the alpha-v/beta-3 integrin receptor. Inhibits formation of vascular-like structures. May be involved in regulation of vascular morphogenesis of remodeling in embryonic development.</text>
</comment>
<comment type="subcellular location">
    <subcellularLocation>
        <location>Secreted</location>
    </subcellularLocation>
</comment>
<comment type="alternative products">
    <event type="alternative splicing"/>
    <isoform>
        <id>O35474-1</id>
        <name>1</name>
        <name>Long</name>
        <sequence type="displayed"/>
    </isoform>
    <isoform>
        <id>O35474-2</id>
        <name>2</name>
        <name>Short</name>
        <sequence type="described" ref="VSP_050400 VSP_050401"/>
    </isoform>
</comment>
<comment type="tissue specificity">
    <text>Expressed in angioblasts and early endothelial cells. By embryonic day 13.5, also expressed in a restricted group of non-endothelial cells including chondrocytes and retinal neurons.</text>
</comment>
<comment type="developmental stage">
    <text>Expressed in the embryo from day 7. After day 15.5, expression decreases and disappears completely by the time of birth.</text>
</comment>
<comment type="domain">
    <text evidence="1">EGF2 and EGF3 form a rigid rod via an interdomain calcium ion binding site, while the long linker between EGF1 and EGF2 lends considerable flexibility to EGF1.</text>
</comment>
<accession>O35474</accession>
<accession>O35475</accession>
<accession>Q8CBF7</accession>
<sequence length="480" mass="53712">MKHLVAAWLLVGLSLGVPQFGKGDICNPNPCENGGICLSGLADDSFSCECPEGFAGPNCSSVVEVASDEEKPTSAGPCIPNPCHNGGTCEISEAYRGDTFIGYVCKCPRGFNGIHCQHNINECEAEPCRNGGICTDLVANYSCECPGEFMGRNCQYKCSGPLGIEGGIISNQQITASSTHRALFGLQKWYPYYARLNKKGLINAWTAAENDRWPWIQINLQRKMRVTGVITQGAKRIGSPEYIKSYKIAYSNDGKTWAMYKVKGTNEEMVFRGNVDNNTPYANSFTPPIKAQYVRLYPQICRRHCTLRMELLGCELSGCSEPLGMKSGHIQDYQITASSVFRTLNMDMFTWEPRKARLDKQGKVNAWTSGHNDQSQWLQVDLLVPTKVTGIITQGAKDFGHVQFVGSYKLAYSNDGEHWMVHQDEKQRKDKVFQGNFDNDTHRKNVIDPPIYARFIRILPWSWYGRITLRSELLGCAEEE</sequence>